<dbReference type="EMBL" id="J02482">
    <property type="protein sequence ID" value="AAA32580.1"/>
    <property type="molecule type" value="Genomic_DNA"/>
</dbReference>
<dbReference type="PIR" id="D93185">
    <property type="entry name" value="ZHBPF4"/>
</dbReference>
<dbReference type="PDB" id="4JPN">
    <property type="method" value="X-ray"/>
    <property type="resolution" value="2.10 A"/>
    <property type="chains" value="A/B/C/D/E/F/G/H/I/J=143-221"/>
</dbReference>
<dbReference type="PDB" id="4JPP">
    <property type="method" value="X-ray"/>
    <property type="resolution" value="2.40 A"/>
    <property type="chains" value="A/B/C/D/E=143-282"/>
</dbReference>
<dbReference type="PDBsum" id="4JPN"/>
<dbReference type="PDBsum" id="4JPP"/>
<dbReference type="SMR" id="P03646"/>
<dbReference type="DIP" id="DIP-60692N"/>
<dbReference type="TCDB" id="1.K.3.1.1">
    <property type="family name" value="the phix174 tube-forming spike protein h (phix174-h) family"/>
</dbReference>
<dbReference type="KEGG" id="vg:2546407"/>
<dbReference type="EvolutionaryTrace" id="P03646"/>
<dbReference type="Proteomes" id="UP000005893">
    <property type="component" value="Segment"/>
</dbReference>
<dbReference type="GO" id="GO:0019028">
    <property type="term" value="C:viral capsid"/>
    <property type="evidence" value="ECO:0007669"/>
    <property type="project" value="UniProtKB-KW"/>
</dbReference>
<dbReference type="GO" id="GO:0042802">
    <property type="term" value="F:identical protein binding"/>
    <property type="evidence" value="ECO:0000353"/>
    <property type="project" value="IntAct"/>
</dbReference>
<dbReference type="GO" id="GO:0039638">
    <property type="term" value="P:lipopolysaccharide-mediated virion attachment to host cell"/>
    <property type="evidence" value="ECO:0000315"/>
    <property type="project" value="CACAO"/>
</dbReference>
<dbReference type="GO" id="GO:0046718">
    <property type="term" value="P:symbiont entry into host cell"/>
    <property type="evidence" value="ECO:0007669"/>
    <property type="project" value="UniProtKB-KW"/>
</dbReference>
<dbReference type="Gene3D" id="6.10.250.2700">
    <property type="match status" value="1"/>
</dbReference>
<dbReference type="InterPro" id="IPR006777">
    <property type="entry name" value="Microvir_H"/>
</dbReference>
<dbReference type="Pfam" id="PF04687">
    <property type="entry name" value="Microvir_H"/>
    <property type="match status" value="1"/>
</dbReference>
<dbReference type="PIRSF" id="PIRSF004160">
    <property type="entry name" value="Microvir_H"/>
    <property type="match status" value="1"/>
</dbReference>
<sequence>MFGAIAGGIASALAGGAMSKLFGGGQKAASGGIQGDVLATDNNTVGMGDAGIKSAIQGSNVPNPDEAAPSFVSGAMAKAGKGLLEGTLQAGTSAVSDKLLDLVGLGGKSAADKGKDTRDYLAAAFPELNAWERAGADASSAGMVDAGFENQKELTKMQLDNQKEIAEMQNETQKEIAGIQSATSRQNTKDQVYAQNEMLAYQQKESTARVASIMENTNLSKQQQVSEIMRQMLTQAQTAGQYFTNDQIKEMTRKVSAEVDLVHQQTQNQRYGSSHIGATAKDISNVVTDAASGVVDIFHGIDKAVADTWNNFWKDGKADGIGSNLSRK</sequence>
<feature type="chain" id="PRO_0000164901" description="Minor spike protein H">
    <location>
        <begin position="1"/>
        <end position="328"/>
    </location>
</feature>
<feature type="helix" evidence="5">
    <location>
        <begin position="146"/>
        <end position="215"/>
    </location>
</feature>
<evidence type="ECO:0000269" key="1">
    <source>
    </source>
</evidence>
<evidence type="ECO:0000269" key="2">
    <source>
    </source>
</evidence>
<evidence type="ECO:0000269" key="3">
    <source>
    </source>
</evidence>
<evidence type="ECO:0000305" key="4"/>
<evidence type="ECO:0007829" key="5">
    <source>
        <dbReference type="PDB" id="4JPN"/>
    </source>
</evidence>
<organism>
    <name type="scientific">Enterobacteria phage phiX174</name>
    <name type="common">Isolate Sanger</name>
    <name type="synonym">Bacteriophage phi-X174</name>
    <dbReference type="NCBI Taxonomy" id="1217068"/>
    <lineage>
        <taxon>Viruses</taxon>
        <taxon>Monodnaviria</taxon>
        <taxon>Sangervirae</taxon>
        <taxon>Phixviricota</taxon>
        <taxon>Malgrandaviricetes</taxon>
        <taxon>Petitvirales</taxon>
        <taxon>Microviridae</taxon>
        <taxon>Bullavirinae</taxon>
        <taxon>Sinsheimervirus</taxon>
        <taxon>Escherichia phage phiX174</taxon>
    </lineage>
</organism>
<protein>
    <recommendedName>
        <fullName>Minor spike protein H</fullName>
    </recommendedName>
    <alternativeName>
        <fullName>H protein</fullName>
    </alternativeName>
    <alternativeName>
        <fullName>Pilot protein</fullName>
    </alternativeName>
</protein>
<organismHost>
    <name type="scientific">Escherichia coli C</name>
    <dbReference type="NCBI Taxonomy" id="498388"/>
</organismHost>
<keyword id="KW-0002">3D-structure</keyword>
<keyword id="KW-0167">Capsid protein</keyword>
<keyword id="KW-0945">Host-virus interaction</keyword>
<keyword id="KW-1185">Reference proteome</keyword>
<keyword id="KW-1171">Viral genome ejection through host cell envelope</keyword>
<keyword id="KW-1162">Viral penetration into host cytoplasm</keyword>
<keyword id="KW-0946">Virion</keyword>
<keyword id="KW-1160">Virus entry into host cell</keyword>
<name>H_BPPHS</name>
<comment type="function">
    <text evidence="1 2 3">Self-assembles within the capsid. Upon host cell recognition, probably forms a tube that serves to deliver DNA genome to the host cytoplasm. This tube protrudes only at the time of infection.</text>
</comment>
<comment type="subunit">
    <text>Interacts with B, G and F pentamers to form 12S pre-assembly complex. Joining of twelve 12S complex form the procapsid.</text>
</comment>
<comment type="interaction">
    <interactant intactId="EBI-16086070">
        <id>P03646</id>
    </interactant>
    <interactant intactId="EBI-16086070">
        <id>P03646</id>
        <label>H</label>
    </interactant>
    <organismsDiffer>false</organismsDiffer>
    <experiments>3</experiments>
</comment>
<comment type="subcellular location">
    <subcellularLocation>
        <location evidence="4">Virion</location>
    </subcellularLocation>
</comment>
<comment type="similarity">
    <text evidence="4">Belongs to the microviridae H protein family.</text>
</comment>
<accession>P03646</accession>
<gene>
    <name type="primary">H</name>
</gene>
<proteinExistence type="evidence at protein level"/>
<reference key="1">
    <citation type="journal article" date="1977" name="Nature">
        <title>Nucleotide sequence of bacteriophage phi X174 DNA.</title>
        <authorList>
            <person name="Sanger F."/>
            <person name="Air G.M."/>
            <person name="Barrell B.G."/>
            <person name="Brown N.L."/>
            <person name="Coulson A.R."/>
            <person name="Fiddes J.C."/>
            <person name="Hutchison C.A. III"/>
            <person name="Slocombe P.M."/>
            <person name="Smith M."/>
        </authorList>
    </citation>
    <scope>NUCLEOTIDE SEQUENCE [GENOMIC DNA]</scope>
</reference>
<reference key="2">
    <citation type="journal article" date="1978" name="J. Mol. Biol.">
        <title>The nucleotide sequence of bacteriophage phiX174.</title>
        <authorList>
            <person name="Sanger F."/>
            <person name="Coulson A.R."/>
            <person name="Friedmann T."/>
            <person name="Air G.M."/>
            <person name="Barrell B.G."/>
            <person name="Brown N.L."/>
            <person name="Fiddes J.C."/>
            <person name="Hutchison C.A. III"/>
            <person name="Slocombe P.M."/>
            <person name="Smith M."/>
        </authorList>
    </citation>
    <scope>SEQUENCE REVISION</scope>
</reference>
<reference key="3">
    <citation type="journal article" date="2000" name="J. Biochem.">
        <title>Characterization of the binding of spike H protein of bacteriophage phiX174 with receptor lipopolysaccharides.</title>
        <authorList>
            <person name="Inagaki M."/>
            <person name="Tanaka A."/>
            <person name="Suzuki R."/>
            <person name="Wakashima H."/>
            <person name="Kawaura T."/>
            <person name="Karita S."/>
            <person name="Nishikawa S."/>
            <person name="Kashimura N."/>
        </authorList>
    </citation>
    <scope>FUNCTION</scope>
    <scope>BINDING TO RECEPTOR LIPOPOLYSACCHARIDES</scope>
</reference>
<reference key="4">
    <citation type="journal article" date="2005" name="FEMS Microbiol. Lett.">
        <title>Crucial role of the lipid part of lipopolysaccharide for conformational change of minor spike H protein of bacteriophage phiX174.</title>
        <authorList>
            <person name="Inagaki M."/>
            <person name="Wakashima H."/>
            <person name="Kato M."/>
            <person name="Kaitani K."/>
            <person name="Nishikawa S."/>
        </authorList>
    </citation>
    <scope>FUNCTION</scope>
</reference>
<reference key="5">
    <citation type="journal article" date="1992" name="Nature">
        <title>Atomic structure of single-stranded DNA bacteriophage phi X174 and its functional implications.</title>
        <authorList>
            <person name="McKenna R."/>
            <person name="Xia D."/>
            <person name="Williangmann P."/>
            <person name="Ilag L.L."/>
            <person name="Krishnaswamy S."/>
            <person name="Rossmann M.G."/>
            <person name="Olson N.H."/>
            <person name="Baker T.S."/>
            <person name="Incardona N.L."/>
        </authorList>
    </citation>
    <scope>CRYSTALLIZATION</scope>
</reference>
<reference key="6">
    <citation type="journal article" date="1994" name="J. Mol. Biol.">
        <title>Analysis of the single-stranded DNA bacteriophage phi X174, refined at a resolution of 3.0 A.</title>
        <authorList>
            <person name="McKenna R."/>
            <person name="Ilag L.L."/>
            <person name="Rossmann M.G."/>
        </authorList>
    </citation>
    <scope>X-RAY CRYSTALLOGRAPHY (3.0 ANGSTROMS)</scope>
</reference>
<reference key="7">
    <citation type="journal article" date="2014" name="Nature">
        <title>Icosahedral bacteriophage PhiX174 forms a tail for DNA transport during infection.</title>
        <authorList>
            <person name="Sun L."/>
            <person name="Young L.N."/>
            <person name="Zhang X."/>
            <person name="Boudko S.P."/>
            <person name="Fokine A."/>
            <person name="Zbornik E."/>
            <person name="Roznowski A.P."/>
            <person name="Molineux I.J."/>
            <person name="Rossmann M.G."/>
            <person name="Fane B.A."/>
        </authorList>
    </citation>
    <scope>X-RAY CRYSTALLOGRAPHY (2.1 ANGSTROMS) OF 143-221</scope>
    <scope>FUNCTION</scope>
</reference>